<proteinExistence type="inferred from homology"/>
<name>RPOZ_HAEIE</name>
<keyword id="KW-0240">DNA-directed RNA polymerase</keyword>
<keyword id="KW-0548">Nucleotidyltransferase</keyword>
<keyword id="KW-0804">Transcription</keyword>
<keyword id="KW-0808">Transferase</keyword>
<reference key="1">
    <citation type="journal article" date="2007" name="Genome Biol.">
        <title>Characterization and modeling of the Haemophilus influenzae core and supragenomes based on the complete genomic sequences of Rd and 12 clinical nontypeable strains.</title>
        <authorList>
            <person name="Hogg J.S."/>
            <person name="Hu F.Z."/>
            <person name="Janto B."/>
            <person name="Boissy R."/>
            <person name="Hayes J."/>
            <person name="Keefe R."/>
            <person name="Post J.C."/>
            <person name="Ehrlich G.D."/>
        </authorList>
    </citation>
    <scope>NUCLEOTIDE SEQUENCE [LARGE SCALE GENOMIC DNA]</scope>
    <source>
        <strain>PittEE</strain>
    </source>
</reference>
<feature type="chain" id="PRO_1000005934" description="DNA-directed RNA polymerase subunit omega">
    <location>
        <begin position="1"/>
        <end position="88"/>
    </location>
</feature>
<organism>
    <name type="scientific">Haemophilus influenzae (strain PittEE)</name>
    <dbReference type="NCBI Taxonomy" id="374930"/>
    <lineage>
        <taxon>Bacteria</taxon>
        <taxon>Pseudomonadati</taxon>
        <taxon>Pseudomonadota</taxon>
        <taxon>Gammaproteobacteria</taxon>
        <taxon>Pasteurellales</taxon>
        <taxon>Pasteurellaceae</taxon>
        <taxon>Haemophilus</taxon>
    </lineage>
</organism>
<dbReference type="EC" id="2.7.7.6" evidence="1"/>
<dbReference type="EMBL" id="CP000671">
    <property type="protein sequence ID" value="ABQ98090.1"/>
    <property type="molecule type" value="Genomic_DNA"/>
</dbReference>
<dbReference type="SMR" id="A5UBD9"/>
<dbReference type="KEGG" id="hip:CGSHiEE_03325"/>
<dbReference type="HOGENOM" id="CLU_125406_5_3_6"/>
<dbReference type="GO" id="GO:0000428">
    <property type="term" value="C:DNA-directed RNA polymerase complex"/>
    <property type="evidence" value="ECO:0007669"/>
    <property type="project" value="UniProtKB-KW"/>
</dbReference>
<dbReference type="GO" id="GO:0003677">
    <property type="term" value="F:DNA binding"/>
    <property type="evidence" value="ECO:0007669"/>
    <property type="project" value="UniProtKB-UniRule"/>
</dbReference>
<dbReference type="GO" id="GO:0003899">
    <property type="term" value="F:DNA-directed RNA polymerase activity"/>
    <property type="evidence" value="ECO:0007669"/>
    <property type="project" value="UniProtKB-UniRule"/>
</dbReference>
<dbReference type="GO" id="GO:0006351">
    <property type="term" value="P:DNA-templated transcription"/>
    <property type="evidence" value="ECO:0007669"/>
    <property type="project" value="UniProtKB-UniRule"/>
</dbReference>
<dbReference type="Gene3D" id="3.90.940.10">
    <property type="match status" value="1"/>
</dbReference>
<dbReference type="HAMAP" id="MF_00366">
    <property type="entry name" value="RNApol_bact_RpoZ"/>
    <property type="match status" value="1"/>
</dbReference>
<dbReference type="InterPro" id="IPR003716">
    <property type="entry name" value="DNA-dir_RNA_pol_omega"/>
</dbReference>
<dbReference type="InterPro" id="IPR006110">
    <property type="entry name" value="Pol_omega/Rpo6/RPB6"/>
</dbReference>
<dbReference type="InterPro" id="IPR036161">
    <property type="entry name" value="RPB6/omega-like_sf"/>
</dbReference>
<dbReference type="NCBIfam" id="TIGR00690">
    <property type="entry name" value="rpoZ"/>
    <property type="match status" value="1"/>
</dbReference>
<dbReference type="PANTHER" id="PTHR34476">
    <property type="entry name" value="DNA-DIRECTED RNA POLYMERASE SUBUNIT OMEGA"/>
    <property type="match status" value="1"/>
</dbReference>
<dbReference type="PANTHER" id="PTHR34476:SF1">
    <property type="entry name" value="DNA-DIRECTED RNA POLYMERASE SUBUNIT OMEGA"/>
    <property type="match status" value="1"/>
</dbReference>
<dbReference type="Pfam" id="PF01192">
    <property type="entry name" value="RNA_pol_Rpb6"/>
    <property type="match status" value="1"/>
</dbReference>
<dbReference type="SMART" id="SM01409">
    <property type="entry name" value="RNA_pol_Rpb6"/>
    <property type="match status" value="1"/>
</dbReference>
<dbReference type="SUPFAM" id="SSF63562">
    <property type="entry name" value="RPB6/omega subunit-like"/>
    <property type="match status" value="1"/>
</dbReference>
<protein>
    <recommendedName>
        <fullName evidence="1">DNA-directed RNA polymerase subunit omega</fullName>
        <shortName evidence="1">RNAP omega subunit</shortName>
        <ecNumber evidence="1">2.7.7.6</ecNumber>
    </recommendedName>
    <alternativeName>
        <fullName evidence="1">RNA polymerase omega subunit</fullName>
    </alternativeName>
    <alternativeName>
        <fullName evidence="1">Transcriptase subunit omega</fullName>
    </alternativeName>
</protein>
<evidence type="ECO:0000255" key="1">
    <source>
        <dbReference type="HAMAP-Rule" id="MF_00366"/>
    </source>
</evidence>
<accession>A5UBD9</accession>
<sequence>MARVTVQDAVEKIGNRFDLILTAARRARQLQLNQSVPLVPEDNDKPTVIALREIEKGLINQDIMDAQEFQKMAKVQETEEAAVALITE</sequence>
<gene>
    <name evidence="1" type="primary">rpoZ</name>
    <name type="ordered locus">CGSHiEE_03325</name>
</gene>
<comment type="function">
    <text evidence="1">Promotes RNA polymerase assembly. Latches the N- and C-terminal regions of the beta' subunit thereby facilitating its interaction with the beta and alpha subunits.</text>
</comment>
<comment type="catalytic activity">
    <reaction evidence="1">
        <text>RNA(n) + a ribonucleoside 5'-triphosphate = RNA(n+1) + diphosphate</text>
        <dbReference type="Rhea" id="RHEA:21248"/>
        <dbReference type="Rhea" id="RHEA-COMP:14527"/>
        <dbReference type="Rhea" id="RHEA-COMP:17342"/>
        <dbReference type="ChEBI" id="CHEBI:33019"/>
        <dbReference type="ChEBI" id="CHEBI:61557"/>
        <dbReference type="ChEBI" id="CHEBI:140395"/>
        <dbReference type="EC" id="2.7.7.6"/>
    </reaction>
</comment>
<comment type="subunit">
    <text evidence="1">The RNAP catalytic core consists of 2 alpha, 1 beta, 1 beta' and 1 omega subunit. When a sigma factor is associated with the core the holoenzyme is formed, which can initiate transcription.</text>
</comment>
<comment type="similarity">
    <text evidence="1">Belongs to the RNA polymerase subunit omega family.</text>
</comment>